<organism>
    <name type="scientific">Escherichia coli O7:K1 (strain IAI39 / ExPEC)</name>
    <dbReference type="NCBI Taxonomy" id="585057"/>
    <lineage>
        <taxon>Bacteria</taxon>
        <taxon>Pseudomonadati</taxon>
        <taxon>Pseudomonadota</taxon>
        <taxon>Gammaproteobacteria</taxon>
        <taxon>Enterobacterales</taxon>
        <taxon>Enterobacteriaceae</taxon>
        <taxon>Escherichia</taxon>
    </lineage>
</organism>
<gene>
    <name evidence="1" type="primary">guaA</name>
    <name type="ordered locus">ECIAI39_2705</name>
</gene>
<name>GUAA_ECO7I</name>
<dbReference type="EC" id="6.3.5.2" evidence="1"/>
<dbReference type="EMBL" id="CU928164">
    <property type="protein sequence ID" value="CAR18828.1"/>
    <property type="molecule type" value="Genomic_DNA"/>
</dbReference>
<dbReference type="RefSeq" id="WP_000138282.1">
    <property type="nucleotide sequence ID" value="NC_011750.1"/>
</dbReference>
<dbReference type="RefSeq" id="YP_002408643.1">
    <property type="nucleotide sequence ID" value="NC_011750.1"/>
</dbReference>
<dbReference type="SMR" id="B7NQV3"/>
<dbReference type="STRING" id="585057.ECIAI39_2705"/>
<dbReference type="MEROPS" id="C26.957"/>
<dbReference type="GeneID" id="75172615"/>
<dbReference type="KEGG" id="ect:ECIAI39_2705"/>
<dbReference type="PATRIC" id="fig|585057.6.peg.2812"/>
<dbReference type="HOGENOM" id="CLU_014340_0_5_6"/>
<dbReference type="UniPathway" id="UPA00189">
    <property type="reaction ID" value="UER00296"/>
</dbReference>
<dbReference type="Proteomes" id="UP000000749">
    <property type="component" value="Chromosome"/>
</dbReference>
<dbReference type="GO" id="GO:0005829">
    <property type="term" value="C:cytosol"/>
    <property type="evidence" value="ECO:0007669"/>
    <property type="project" value="TreeGrafter"/>
</dbReference>
<dbReference type="GO" id="GO:0005524">
    <property type="term" value="F:ATP binding"/>
    <property type="evidence" value="ECO:0007669"/>
    <property type="project" value="UniProtKB-UniRule"/>
</dbReference>
<dbReference type="GO" id="GO:0003921">
    <property type="term" value="F:GMP synthase activity"/>
    <property type="evidence" value="ECO:0007669"/>
    <property type="project" value="InterPro"/>
</dbReference>
<dbReference type="CDD" id="cd01742">
    <property type="entry name" value="GATase1_GMP_Synthase"/>
    <property type="match status" value="1"/>
</dbReference>
<dbReference type="CDD" id="cd01997">
    <property type="entry name" value="GMP_synthase_C"/>
    <property type="match status" value="1"/>
</dbReference>
<dbReference type="FunFam" id="3.30.300.10:FF:000002">
    <property type="entry name" value="GMP synthase [glutamine-hydrolyzing]"/>
    <property type="match status" value="1"/>
</dbReference>
<dbReference type="FunFam" id="3.40.50.620:FF:000001">
    <property type="entry name" value="GMP synthase [glutamine-hydrolyzing]"/>
    <property type="match status" value="1"/>
</dbReference>
<dbReference type="FunFam" id="3.40.50.880:FF:000001">
    <property type="entry name" value="GMP synthase [glutamine-hydrolyzing]"/>
    <property type="match status" value="1"/>
</dbReference>
<dbReference type="Gene3D" id="3.30.300.10">
    <property type="match status" value="1"/>
</dbReference>
<dbReference type="Gene3D" id="3.40.50.880">
    <property type="match status" value="1"/>
</dbReference>
<dbReference type="Gene3D" id="3.40.50.620">
    <property type="entry name" value="HUPs"/>
    <property type="match status" value="1"/>
</dbReference>
<dbReference type="HAMAP" id="MF_00344">
    <property type="entry name" value="GMP_synthase"/>
    <property type="match status" value="1"/>
</dbReference>
<dbReference type="InterPro" id="IPR029062">
    <property type="entry name" value="Class_I_gatase-like"/>
</dbReference>
<dbReference type="InterPro" id="IPR017926">
    <property type="entry name" value="GATASE"/>
</dbReference>
<dbReference type="InterPro" id="IPR001674">
    <property type="entry name" value="GMP_synth_C"/>
</dbReference>
<dbReference type="InterPro" id="IPR004739">
    <property type="entry name" value="GMP_synth_GATase"/>
</dbReference>
<dbReference type="InterPro" id="IPR022955">
    <property type="entry name" value="GMP_synthase"/>
</dbReference>
<dbReference type="InterPro" id="IPR025777">
    <property type="entry name" value="GMPS_ATP_PPase_dom"/>
</dbReference>
<dbReference type="InterPro" id="IPR022310">
    <property type="entry name" value="NAD/GMP_synthase"/>
</dbReference>
<dbReference type="InterPro" id="IPR014729">
    <property type="entry name" value="Rossmann-like_a/b/a_fold"/>
</dbReference>
<dbReference type="NCBIfam" id="TIGR00884">
    <property type="entry name" value="guaA_Cterm"/>
    <property type="match status" value="1"/>
</dbReference>
<dbReference type="NCBIfam" id="TIGR00888">
    <property type="entry name" value="guaA_Nterm"/>
    <property type="match status" value="1"/>
</dbReference>
<dbReference type="NCBIfam" id="NF000848">
    <property type="entry name" value="PRK00074.1"/>
    <property type="match status" value="1"/>
</dbReference>
<dbReference type="PANTHER" id="PTHR11922:SF2">
    <property type="entry name" value="GMP SYNTHASE [GLUTAMINE-HYDROLYZING]"/>
    <property type="match status" value="1"/>
</dbReference>
<dbReference type="PANTHER" id="PTHR11922">
    <property type="entry name" value="GMP SYNTHASE-RELATED"/>
    <property type="match status" value="1"/>
</dbReference>
<dbReference type="Pfam" id="PF00117">
    <property type="entry name" value="GATase"/>
    <property type="match status" value="1"/>
</dbReference>
<dbReference type="Pfam" id="PF00958">
    <property type="entry name" value="GMP_synt_C"/>
    <property type="match status" value="1"/>
</dbReference>
<dbReference type="Pfam" id="PF02540">
    <property type="entry name" value="NAD_synthase"/>
    <property type="match status" value="1"/>
</dbReference>
<dbReference type="PRINTS" id="PR00097">
    <property type="entry name" value="ANTSNTHASEII"/>
</dbReference>
<dbReference type="PRINTS" id="PR00099">
    <property type="entry name" value="CPSGATASE"/>
</dbReference>
<dbReference type="PRINTS" id="PR00096">
    <property type="entry name" value="GATASE"/>
</dbReference>
<dbReference type="SUPFAM" id="SSF52402">
    <property type="entry name" value="Adenine nucleotide alpha hydrolases-like"/>
    <property type="match status" value="1"/>
</dbReference>
<dbReference type="SUPFAM" id="SSF52317">
    <property type="entry name" value="Class I glutamine amidotransferase-like"/>
    <property type="match status" value="1"/>
</dbReference>
<dbReference type="SUPFAM" id="SSF54810">
    <property type="entry name" value="GMP synthetase C-terminal dimerisation domain"/>
    <property type="match status" value="1"/>
</dbReference>
<dbReference type="PROSITE" id="PS51273">
    <property type="entry name" value="GATASE_TYPE_1"/>
    <property type="match status" value="1"/>
</dbReference>
<dbReference type="PROSITE" id="PS51553">
    <property type="entry name" value="GMPS_ATP_PPASE"/>
    <property type="match status" value="1"/>
</dbReference>
<keyword id="KW-0067">ATP-binding</keyword>
<keyword id="KW-0315">Glutamine amidotransferase</keyword>
<keyword id="KW-0332">GMP biosynthesis</keyword>
<keyword id="KW-0436">Ligase</keyword>
<keyword id="KW-0547">Nucleotide-binding</keyword>
<keyword id="KW-0658">Purine biosynthesis</keyword>
<sequence>MTENIHKHRILILDFGSQYTQLVARRVRELGVYCELWAWDVTEAQIRDFNPSGIILSGGPESTTEENSPRAPQYVFEAGVPVFGVCYGMQTMAMQLGGHVEASNEREFGYAQVEVVNDSALVRGIEDALTADGKPLLDVWMSHGDKVTAIPSDFVTVASTESCPFAIMANEEKRFYGVQFHPEVTHTRQGMRMLERFVRDICQCEALWTPAKIIDDAVARIREQVGDDKVILGLSGGVDSSVTAMLLHRAIGKNLTCVFVDNGLLRLNEAEQVLDMFGDHFGLNIVHVPAEDRFLSALAGENDPEAKRKIIGRVFVEVFDEEALKLEDVKWLAQGTIYPDVIESAASATGKAHVIKSHHNVGGLPKEMKMGLVEPLKELFKDEVRKIGLELGLPYDMLYRHPFPGPGLGVRVLGEVKKEYCDLLRRADAIFIEELRKADLYDKVSQAFTVFLPVRSVGVMGDGRKYDWVVSLRAVETIDFMTAHWAHLPYDFLGRVSNRIINEVNGISRVVYDISGKPPATIEWE</sequence>
<protein>
    <recommendedName>
        <fullName evidence="1">GMP synthase [glutamine-hydrolyzing]</fullName>
        <ecNumber evidence="1">6.3.5.2</ecNumber>
    </recommendedName>
    <alternativeName>
        <fullName evidence="1">GMP synthetase</fullName>
    </alternativeName>
    <alternativeName>
        <fullName evidence="1">Glutamine amidotransferase</fullName>
    </alternativeName>
</protein>
<comment type="function">
    <text evidence="1">Catalyzes the synthesis of GMP from XMP.</text>
</comment>
<comment type="catalytic activity">
    <reaction evidence="1">
        <text>XMP + L-glutamine + ATP + H2O = GMP + L-glutamate + AMP + diphosphate + 2 H(+)</text>
        <dbReference type="Rhea" id="RHEA:11680"/>
        <dbReference type="ChEBI" id="CHEBI:15377"/>
        <dbReference type="ChEBI" id="CHEBI:15378"/>
        <dbReference type="ChEBI" id="CHEBI:29985"/>
        <dbReference type="ChEBI" id="CHEBI:30616"/>
        <dbReference type="ChEBI" id="CHEBI:33019"/>
        <dbReference type="ChEBI" id="CHEBI:57464"/>
        <dbReference type="ChEBI" id="CHEBI:58115"/>
        <dbReference type="ChEBI" id="CHEBI:58359"/>
        <dbReference type="ChEBI" id="CHEBI:456215"/>
        <dbReference type="EC" id="6.3.5.2"/>
    </reaction>
</comment>
<comment type="pathway">
    <text evidence="1">Purine metabolism; GMP biosynthesis; GMP from XMP (L-Gln route): step 1/1.</text>
</comment>
<comment type="subunit">
    <text evidence="1">Homodimer.</text>
</comment>
<feature type="chain" id="PRO_1000120281" description="GMP synthase [glutamine-hydrolyzing]">
    <location>
        <begin position="1"/>
        <end position="525"/>
    </location>
</feature>
<feature type="domain" description="Glutamine amidotransferase type-1" evidence="1">
    <location>
        <begin position="9"/>
        <end position="207"/>
    </location>
</feature>
<feature type="domain" description="GMPS ATP-PPase" evidence="1">
    <location>
        <begin position="208"/>
        <end position="400"/>
    </location>
</feature>
<feature type="active site" description="Nucleophile" evidence="1">
    <location>
        <position position="86"/>
    </location>
</feature>
<feature type="active site" evidence="1">
    <location>
        <position position="181"/>
    </location>
</feature>
<feature type="active site" evidence="1">
    <location>
        <position position="183"/>
    </location>
</feature>
<feature type="binding site" evidence="1">
    <location>
        <begin position="235"/>
        <end position="241"/>
    </location>
    <ligand>
        <name>ATP</name>
        <dbReference type="ChEBI" id="CHEBI:30616"/>
    </ligand>
</feature>
<accession>B7NQV3</accession>
<reference key="1">
    <citation type="journal article" date="2009" name="PLoS Genet.">
        <title>Organised genome dynamics in the Escherichia coli species results in highly diverse adaptive paths.</title>
        <authorList>
            <person name="Touchon M."/>
            <person name="Hoede C."/>
            <person name="Tenaillon O."/>
            <person name="Barbe V."/>
            <person name="Baeriswyl S."/>
            <person name="Bidet P."/>
            <person name="Bingen E."/>
            <person name="Bonacorsi S."/>
            <person name="Bouchier C."/>
            <person name="Bouvet O."/>
            <person name="Calteau A."/>
            <person name="Chiapello H."/>
            <person name="Clermont O."/>
            <person name="Cruveiller S."/>
            <person name="Danchin A."/>
            <person name="Diard M."/>
            <person name="Dossat C."/>
            <person name="Karoui M.E."/>
            <person name="Frapy E."/>
            <person name="Garry L."/>
            <person name="Ghigo J.M."/>
            <person name="Gilles A.M."/>
            <person name="Johnson J."/>
            <person name="Le Bouguenec C."/>
            <person name="Lescat M."/>
            <person name="Mangenot S."/>
            <person name="Martinez-Jehanne V."/>
            <person name="Matic I."/>
            <person name="Nassif X."/>
            <person name="Oztas S."/>
            <person name="Petit M.A."/>
            <person name="Pichon C."/>
            <person name="Rouy Z."/>
            <person name="Ruf C.S."/>
            <person name="Schneider D."/>
            <person name="Tourret J."/>
            <person name="Vacherie B."/>
            <person name="Vallenet D."/>
            <person name="Medigue C."/>
            <person name="Rocha E.P.C."/>
            <person name="Denamur E."/>
        </authorList>
    </citation>
    <scope>NUCLEOTIDE SEQUENCE [LARGE SCALE GENOMIC DNA]</scope>
    <source>
        <strain>IAI39 / ExPEC</strain>
    </source>
</reference>
<evidence type="ECO:0000255" key="1">
    <source>
        <dbReference type="HAMAP-Rule" id="MF_00344"/>
    </source>
</evidence>
<proteinExistence type="inferred from homology"/>